<accession>A6UDM1</accession>
<organism>
    <name type="scientific">Sinorhizobium medicae (strain WSM419)</name>
    <name type="common">Ensifer medicae</name>
    <dbReference type="NCBI Taxonomy" id="366394"/>
    <lineage>
        <taxon>Bacteria</taxon>
        <taxon>Pseudomonadati</taxon>
        <taxon>Pseudomonadota</taxon>
        <taxon>Alphaproteobacteria</taxon>
        <taxon>Hyphomicrobiales</taxon>
        <taxon>Rhizobiaceae</taxon>
        <taxon>Sinorhizobium/Ensifer group</taxon>
        <taxon>Sinorhizobium</taxon>
    </lineage>
</organism>
<feature type="chain" id="PRO_0000339589" description="ATP synthase subunit beta">
    <location>
        <begin position="1"/>
        <end position="509"/>
    </location>
</feature>
<feature type="region of interest" description="Disordered" evidence="2">
    <location>
        <begin position="1"/>
        <end position="28"/>
    </location>
</feature>
<feature type="binding site" evidence="1">
    <location>
        <begin position="187"/>
        <end position="194"/>
    </location>
    <ligand>
        <name>ATP</name>
        <dbReference type="ChEBI" id="CHEBI:30616"/>
    </ligand>
</feature>
<reference key="1">
    <citation type="submission" date="2007-06" db="EMBL/GenBank/DDBJ databases">
        <title>Complete sequence of Sinorhizobium medicae WSM419 chromosome.</title>
        <authorList>
            <consortium name="US DOE Joint Genome Institute"/>
            <person name="Copeland A."/>
            <person name="Lucas S."/>
            <person name="Lapidus A."/>
            <person name="Barry K."/>
            <person name="Glavina del Rio T."/>
            <person name="Dalin E."/>
            <person name="Tice H."/>
            <person name="Pitluck S."/>
            <person name="Chain P."/>
            <person name="Malfatti S."/>
            <person name="Shin M."/>
            <person name="Vergez L."/>
            <person name="Schmutz J."/>
            <person name="Larimer F."/>
            <person name="Land M."/>
            <person name="Hauser L."/>
            <person name="Kyrpides N."/>
            <person name="Mikhailova N."/>
            <person name="Reeve W.G."/>
            <person name="Richardson P."/>
        </authorList>
    </citation>
    <scope>NUCLEOTIDE SEQUENCE [LARGE SCALE GENOMIC DNA]</scope>
    <source>
        <strain>WSM419</strain>
    </source>
</reference>
<proteinExistence type="inferred from homology"/>
<comment type="function">
    <text evidence="1">Produces ATP from ADP in the presence of a proton gradient across the membrane. The catalytic sites are hosted primarily by the beta subunits.</text>
</comment>
<comment type="catalytic activity">
    <reaction evidence="1">
        <text>ATP + H2O + 4 H(+)(in) = ADP + phosphate + 5 H(+)(out)</text>
        <dbReference type="Rhea" id="RHEA:57720"/>
        <dbReference type="ChEBI" id="CHEBI:15377"/>
        <dbReference type="ChEBI" id="CHEBI:15378"/>
        <dbReference type="ChEBI" id="CHEBI:30616"/>
        <dbReference type="ChEBI" id="CHEBI:43474"/>
        <dbReference type="ChEBI" id="CHEBI:456216"/>
        <dbReference type="EC" id="7.1.2.2"/>
    </reaction>
</comment>
<comment type="subunit">
    <text evidence="1">F-type ATPases have 2 components, CF(1) - the catalytic core - and CF(0) - the membrane proton channel. CF(1) has five subunits: alpha(3), beta(3), gamma(1), delta(1), epsilon(1). CF(0) has three main subunits: a(1), b(2) and c(9-12). The alpha and beta chains form an alternating ring which encloses part of the gamma chain. CF(1) is attached to CF(0) by a central stalk formed by the gamma and epsilon chains, while a peripheral stalk is formed by the delta and b chains.</text>
</comment>
<comment type="subcellular location">
    <subcellularLocation>
        <location evidence="1">Cell inner membrane</location>
        <topology evidence="1">Peripheral membrane protein</topology>
    </subcellularLocation>
</comment>
<comment type="similarity">
    <text evidence="1">Belongs to the ATPase alpha/beta chains family.</text>
</comment>
<name>ATPB_SINMW</name>
<gene>
    <name evidence="1" type="primary">atpD</name>
    <name type="ordered locus">Smed_2922</name>
</gene>
<dbReference type="EC" id="7.1.2.2" evidence="1"/>
<dbReference type="EMBL" id="CP000738">
    <property type="protein sequence ID" value="ABR61751.1"/>
    <property type="molecule type" value="Genomic_DNA"/>
</dbReference>
<dbReference type="RefSeq" id="WP_012067133.1">
    <property type="nucleotide sequence ID" value="NC_009636.1"/>
</dbReference>
<dbReference type="RefSeq" id="YP_001328586.1">
    <property type="nucleotide sequence ID" value="NC_009636.1"/>
</dbReference>
<dbReference type="SMR" id="A6UDM1"/>
<dbReference type="STRING" id="366394.Smed_2922"/>
<dbReference type="GeneID" id="61610509"/>
<dbReference type="KEGG" id="smd:Smed_2922"/>
<dbReference type="PATRIC" id="fig|366394.8.peg.6139"/>
<dbReference type="eggNOG" id="COG0055">
    <property type="taxonomic scope" value="Bacteria"/>
</dbReference>
<dbReference type="HOGENOM" id="CLU_022398_0_2_5"/>
<dbReference type="OrthoDB" id="9801639at2"/>
<dbReference type="Proteomes" id="UP000001108">
    <property type="component" value="Chromosome"/>
</dbReference>
<dbReference type="GO" id="GO:0005886">
    <property type="term" value="C:plasma membrane"/>
    <property type="evidence" value="ECO:0007669"/>
    <property type="project" value="UniProtKB-SubCell"/>
</dbReference>
<dbReference type="GO" id="GO:0045259">
    <property type="term" value="C:proton-transporting ATP synthase complex"/>
    <property type="evidence" value="ECO:0007669"/>
    <property type="project" value="UniProtKB-KW"/>
</dbReference>
<dbReference type="GO" id="GO:0005524">
    <property type="term" value="F:ATP binding"/>
    <property type="evidence" value="ECO:0007669"/>
    <property type="project" value="UniProtKB-UniRule"/>
</dbReference>
<dbReference type="GO" id="GO:0016887">
    <property type="term" value="F:ATP hydrolysis activity"/>
    <property type="evidence" value="ECO:0007669"/>
    <property type="project" value="InterPro"/>
</dbReference>
<dbReference type="GO" id="GO:0046933">
    <property type="term" value="F:proton-transporting ATP synthase activity, rotational mechanism"/>
    <property type="evidence" value="ECO:0007669"/>
    <property type="project" value="UniProtKB-UniRule"/>
</dbReference>
<dbReference type="CDD" id="cd18110">
    <property type="entry name" value="ATP-synt_F1_beta_C"/>
    <property type="match status" value="1"/>
</dbReference>
<dbReference type="CDD" id="cd18115">
    <property type="entry name" value="ATP-synt_F1_beta_N"/>
    <property type="match status" value="1"/>
</dbReference>
<dbReference type="CDD" id="cd01133">
    <property type="entry name" value="F1-ATPase_beta_CD"/>
    <property type="match status" value="1"/>
</dbReference>
<dbReference type="FunFam" id="1.10.1140.10:FF:000001">
    <property type="entry name" value="ATP synthase subunit beta"/>
    <property type="match status" value="1"/>
</dbReference>
<dbReference type="FunFam" id="2.40.10.170:FF:000005">
    <property type="entry name" value="ATP synthase subunit beta"/>
    <property type="match status" value="1"/>
</dbReference>
<dbReference type="FunFam" id="3.40.50.300:FF:000026">
    <property type="entry name" value="ATP synthase subunit beta"/>
    <property type="match status" value="1"/>
</dbReference>
<dbReference type="Gene3D" id="2.40.10.170">
    <property type="match status" value="1"/>
</dbReference>
<dbReference type="Gene3D" id="1.10.1140.10">
    <property type="entry name" value="Bovine Mitochondrial F1-atpase, Atp Synthase Beta Chain, Chain D, domain 3"/>
    <property type="match status" value="1"/>
</dbReference>
<dbReference type="Gene3D" id="3.40.50.300">
    <property type="entry name" value="P-loop containing nucleotide triphosphate hydrolases"/>
    <property type="match status" value="1"/>
</dbReference>
<dbReference type="HAMAP" id="MF_01347">
    <property type="entry name" value="ATP_synth_beta_bact"/>
    <property type="match status" value="1"/>
</dbReference>
<dbReference type="InterPro" id="IPR003593">
    <property type="entry name" value="AAA+_ATPase"/>
</dbReference>
<dbReference type="InterPro" id="IPR055190">
    <property type="entry name" value="ATP-synt_VA_C"/>
</dbReference>
<dbReference type="InterPro" id="IPR005722">
    <property type="entry name" value="ATP_synth_F1_bsu"/>
</dbReference>
<dbReference type="InterPro" id="IPR020003">
    <property type="entry name" value="ATPase_a/bsu_AS"/>
</dbReference>
<dbReference type="InterPro" id="IPR050053">
    <property type="entry name" value="ATPase_alpha/beta_chains"/>
</dbReference>
<dbReference type="InterPro" id="IPR004100">
    <property type="entry name" value="ATPase_F1/V1/A1_a/bsu_N"/>
</dbReference>
<dbReference type="InterPro" id="IPR036121">
    <property type="entry name" value="ATPase_F1/V1/A1_a/bsu_N_sf"/>
</dbReference>
<dbReference type="InterPro" id="IPR000194">
    <property type="entry name" value="ATPase_F1/V1/A1_a/bsu_nucl-bd"/>
</dbReference>
<dbReference type="InterPro" id="IPR024034">
    <property type="entry name" value="ATPase_F1/V1_b/a_C"/>
</dbReference>
<dbReference type="InterPro" id="IPR027417">
    <property type="entry name" value="P-loop_NTPase"/>
</dbReference>
<dbReference type="NCBIfam" id="TIGR01039">
    <property type="entry name" value="atpD"/>
    <property type="match status" value="1"/>
</dbReference>
<dbReference type="PANTHER" id="PTHR15184">
    <property type="entry name" value="ATP SYNTHASE"/>
    <property type="match status" value="1"/>
</dbReference>
<dbReference type="PANTHER" id="PTHR15184:SF71">
    <property type="entry name" value="ATP SYNTHASE SUBUNIT BETA, MITOCHONDRIAL"/>
    <property type="match status" value="1"/>
</dbReference>
<dbReference type="Pfam" id="PF00006">
    <property type="entry name" value="ATP-synt_ab"/>
    <property type="match status" value="1"/>
</dbReference>
<dbReference type="Pfam" id="PF02874">
    <property type="entry name" value="ATP-synt_ab_N"/>
    <property type="match status" value="1"/>
</dbReference>
<dbReference type="Pfam" id="PF22919">
    <property type="entry name" value="ATP-synt_VA_C"/>
    <property type="match status" value="1"/>
</dbReference>
<dbReference type="PIRSF" id="PIRSF039072">
    <property type="entry name" value="ATPase_subunit_beta"/>
    <property type="match status" value="1"/>
</dbReference>
<dbReference type="SMART" id="SM00382">
    <property type="entry name" value="AAA"/>
    <property type="match status" value="1"/>
</dbReference>
<dbReference type="SUPFAM" id="SSF47917">
    <property type="entry name" value="C-terminal domain of alpha and beta subunits of F1 ATP synthase"/>
    <property type="match status" value="1"/>
</dbReference>
<dbReference type="SUPFAM" id="SSF50615">
    <property type="entry name" value="N-terminal domain of alpha and beta subunits of F1 ATP synthase"/>
    <property type="match status" value="1"/>
</dbReference>
<dbReference type="SUPFAM" id="SSF52540">
    <property type="entry name" value="P-loop containing nucleoside triphosphate hydrolases"/>
    <property type="match status" value="1"/>
</dbReference>
<dbReference type="PROSITE" id="PS00152">
    <property type="entry name" value="ATPASE_ALPHA_BETA"/>
    <property type="match status" value="1"/>
</dbReference>
<protein>
    <recommendedName>
        <fullName evidence="1">ATP synthase subunit beta</fullName>
        <ecNumber evidence="1">7.1.2.2</ecNumber>
    </recommendedName>
    <alternativeName>
        <fullName evidence="1">ATP synthase F1 sector subunit beta</fullName>
    </alternativeName>
    <alternativeName>
        <fullName evidence="1">F-ATPase subunit beta</fullName>
    </alternativeName>
</protein>
<keyword id="KW-0066">ATP synthesis</keyword>
<keyword id="KW-0067">ATP-binding</keyword>
<keyword id="KW-0997">Cell inner membrane</keyword>
<keyword id="KW-1003">Cell membrane</keyword>
<keyword id="KW-0139">CF(1)</keyword>
<keyword id="KW-0375">Hydrogen ion transport</keyword>
<keyword id="KW-0406">Ion transport</keyword>
<keyword id="KW-0472">Membrane</keyword>
<keyword id="KW-0547">Nucleotide-binding</keyword>
<keyword id="KW-1278">Translocase</keyword>
<keyword id="KW-0813">Transport</keyword>
<sequence>MAKAATPKETAAAKKPAAPKKAASAKTASATTVVAATGAVGRVTQVIGAVVDVAFEEGQLPKILNALETDNNGNRLVLEVAQHLGENSVRTIAMDSTEGLVRGQKVTDTGAPIAVPVGKETLGRIMNVIGEPVDEAGPLKTSARRAIHQDAPAYVDQSTEAQILVTGIKVVDLLAPYAKGGKIGLFGGAGVGKTVLIMELINNVAKAHGGYSVFAGVGERTREGNDLYHEMIESGVNKHGGGEGSKAALVYGQMNEPPGARARVALTGLTVAEQFRDEGQDVLFFVDNIFRFTQAGSEVSALLGRIPSAVGYQPTLATDMGQMQERITTTTKGSITSVQAIYVPADDLTDPAPATSFAHLDATTVLSRSIAEKGIYPAVDPLDSTSRMLDPMVVGEEHYEVARKVQGTLQRYKALQDIIAILGMDELSEEDKIAVARARKIERFLSQPFFVAEVFTGSPGKLVALEDTIKGFKGLVNGEYDHLPEAAFYMVGSIEEAVEKAKKLAAEAA</sequence>
<evidence type="ECO:0000255" key="1">
    <source>
        <dbReference type="HAMAP-Rule" id="MF_01347"/>
    </source>
</evidence>
<evidence type="ECO:0000256" key="2">
    <source>
        <dbReference type="SAM" id="MobiDB-lite"/>
    </source>
</evidence>